<feature type="chain" id="PRO_0000077789" description="Terminase, large subunit">
    <location>
        <begin position="1"/>
        <end position="422"/>
    </location>
</feature>
<feature type="region of interest" description="ATPase activity" evidence="1 4 6">
    <location>
        <begin position="1"/>
        <end position="198"/>
    </location>
</feature>
<feature type="region of interest" description="Nuclease activity and binding to the portal protein" evidence="1 4 6">
    <location>
        <begin position="232"/>
        <end position="422"/>
    </location>
</feature>
<feature type="short sequence motif" description="Walker A motif" evidence="1 4">
    <location>
        <begin position="33"/>
        <end position="40"/>
    </location>
</feature>
<feature type="short sequence motif" description="Walker B motif" evidence="1 4">
    <location>
        <begin position="130"/>
        <end position="135"/>
    </location>
</feature>
<feature type="active site" description="For ATPase activity" evidence="1">
    <location>
        <position position="135"/>
    </location>
</feature>
<feature type="binding site" evidence="1 5">
    <location>
        <position position="266"/>
    </location>
    <ligand>
        <name>Mn(2+)</name>
        <dbReference type="ChEBI" id="CHEBI:29035"/>
        <label>1</label>
        <note>catalytic; for nuclease activity</note>
    </ligand>
</feature>
<feature type="binding site" evidence="1 5">
    <location>
        <position position="266"/>
    </location>
    <ligand>
        <name>Mn(2+)</name>
        <dbReference type="ChEBI" id="CHEBI:29035"/>
        <label>2</label>
        <note>catalytic; for nuclease activity</note>
    </ligand>
</feature>
<feature type="binding site" evidence="1 5">
    <location>
        <position position="321"/>
    </location>
    <ligand>
        <name>Mn(2+)</name>
        <dbReference type="ChEBI" id="CHEBI:29035"/>
        <label>1</label>
        <note>catalytic; for nuclease activity</note>
    </ligand>
</feature>
<feature type="binding site" evidence="1 5">
    <location>
        <position position="400"/>
    </location>
    <ligand>
        <name>Mn(2+)</name>
        <dbReference type="ChEBI" id="CHEBI:29035"/>
        <label>2</label>
        <note>catalytic; for nuclease activity</note>
    </ligand>
</feature>
<feature type="binding site" evidence="1 5">
    <location>
        <position position="403"/>
    </location>
    <ligand>
        <name>Mn(2+)</name>
        <dbReference type="ChEBI" id="CHEBI:29035"/>
        <label>2</label>
        <note>catalytic; for nuclease activity</note>
    </ligand>
</feature>
<feature type="sequence variant" description="In isolate Ts6M; temperature-sensitive.">
    <original>W</original>
    <variation>R</variation>
    <location>
        <position position="18"/>
    </location>
</feature>
<feature type="sequence variant" description="In isolate SUS19.">
    <original>F</original>
    <variation>L</variation>
    <location>
        <position position="73"/>
    </location>
</feature>
<feature type="sequence variant" description="In isolate SUS19.">
    <original>L</original>
    <variation>F</variation>
    <location>
        <position position="233"/>
    </location>
</feature>
<feature type="sequence variant" description="In isolate Ts10M; temperature-sensitive.">
    <original>D</original>
    <variation>N</variation>
    <location>
        <position position="412"/>
    </location>
</feature>
<feature type="mutagenesis site" description="Complete loss of endonuclease activity.">
    <original>D</original>
    <variation>N</variation>
    <location>
        <position position="266"/>
    </location>
</feature>
<feature type="mutagenesis site" description="Complete loss of endonuclease activity.">
    <original>D</original>
    <variation>N</variation>
    <location>
        <position position="321"/>
    </location>
</feature>
<feature type="mutagenesis site" description="Decreased endonuclease activity.">
    <original>H</original>
    <variation>A</variation>
    <location>
        <position position="400"/>
    </location>
</feature>
<feature type="mutagenesis site" description="Complete loss of endonuclease activity.">
    <original>D</original>
    <variation>N</variation>
    <location>
        <position position="403"/>
    </location>
</feature>
<feature type="strand" evidence="11">
    <location>
        <begin position="243"/>
        <end position="245"/>
    </location>
</feature>
<feature type="helix" evidence="11">
    <location>
        <begin position="252"/>
        <end position="257"/>
    </location>
</feature>
<feature type="strand" evidence="11">
    <location>
        <begin position="261"/>
        <end position="266"/>
    </location>
</feature>
<feature type="strand" evidence="11">
    <location>
        <begin position="274"/>
        <end position="282"/>
    </location>
</feature>
<feature type="turn" evidence="11">
    <location>
        <begin position="283"/>
        <end position="286"/>
    </location>
</feature>
<feature type="strand" evidence="11">
    <location>
        <begin position="287"/>
        <end position="298"/>
    </location>
</feature>
<feature type="helix" evidence="11">
    <location>
        <begin position="301"/>
        <end position="310"/>
    </location>
</feature>
<feature type="strand" evidence="11">
    <location>
        <begin position="318"/>
        <end position="320"/>
    </location>
</feature>
<feature type="helix" evidence="11">
    <location>
        <begin position="325"/>
        <end position="333"/>
    </location>
</feature>
<feature type="strand" evidence="11">
    <location>
        <begin position="340"/>
        <end position="342"/>
    </location>
</feature>
<feature type="helix" evidence="11">
    <location>
        <begin position="347"/>
        <end position="349"/>
    </location>
</feature>
<feature type="helix" evidence="11">
    <location>
        <begin position="350"/>
        <end position="358"/>
    </location>
</feature>
<feature type="strand" evidence="11">
    <location>
        <begin position="360"/>
        <end position="365"/>
    </location>
</feature>
<feature type="turn" evidence="11">
    <location>
        <begin position="367"/>
        <end position="369"/>
    </location>
</feature>
<feature type="helix" evidence="11">
    <location>
        <begin position="371"/>
        <end position="379"/>
    </location>
</feature>
<feature type="strand" evidence="11">
    <location>
        <begin position="382"/>
        <end position="384"/>
    </location>
</feature>
<feature type="strand" evidence="12">
    <location>
        <begin position="386"/>
        <end position="388"/>
    </location>
</feature>
<feature type="strand" evidence="11">
    <location>
        <begin position="390"/>
        <end position="394"/>
    </location>
</feature>
<feature type="strand" evidence="11">
    <location>
        <begin position="396"/>
        <end position="398"/>
    </location>
</feature>
<feature type="helix" evidence="11">
    <location>
        <begin position="400"/>
        <end position="408"/>
    </location>
</feature>
<feature type="helix" evidence="11">
    <location>
        <begin position="410"/>
        <end position="412"/>
    </location>
</feature>
<gene>
    <name type="primary">2</name>
</gene>
<dbReference type="EC" id="3.1.-.-" evidence="1 2 3 5 6"/>
<dbReference type="EC" id="3.6.4.-" evidence="1 2 3"/>
<dbReference type="EMBL" id="X56064">
    <property type="protein sequence ID" value="CAA39537.1"/>
    <property type="molecule type" value="Genomic_DNA"/>
</dbReference>
<dbReference type="EMBL" id="X97918">
    <property type="protein sequence ID" value="CAA66573.1"/>
    <property type="molecule type" value="Genomic_DNA"/>
</dbReference>
<dbReference type="PIR" id="S24451">
    <property type="entry name" value="S24451"/>
</dbReference>
<dbReference type="RefSeq" id="NP_690654.1">
    <property type="nucleotide sequence ID" value="NC_004166.2"/>
</dbReference>
<dbReference type="PDB" id="2WBN">
    <property type="method" value="X-ray"/>
    <property type="resolution" value="1.90 A"/>
    <property type="chains" value="A=232-422"/>
</dbReference>
<dbReference type="PDB" id="2WC9">
    <property type="method" value="X-ray"/>
    <property type="resolution" value="2.50 A"/>
    <property type="chains" value="A=232-422"/>
</dbReference>
<dbReference type="PDBsum" id="2WBN"/>
<dbReference type="PDBsum" id="2WC9"/>
<dbReference type="SMR" id="P54308"/>
<dbReference type="KEGG" id="vg:955254"/>
<dbReference type="OrthoDB" id="2120at10239"/>
<dbReference type="EvolutionaryTrace" id="P54308"/>
<dbReference type="Proteomes" id="UP000002559">
    <property type="component" value="Genome"/>
</dbReference>
<dbReference type="GO" id="GO:0098009">
    <property type="term" value="C:viral terminase, large subunit"/>
    <property type="evidence" value="ECO:0000314"/>
    <property type="project" value="UniProtKB"/>
</dbReference>
<dbReference type="GO" id="GO:0005524">
    <property type="term" value="F:ATP binding"/>
    <property type="evidence" value="ECO:0007669"/>
    <property type="project" value="UniProtKB-KW"/>
</dbReference>
<dbReference type="GO" id="GO:0016887">
    <property type="term" value="F:ATP hydrolysis activity"/>
    <property type="evidence" value="ECO:0007669"/>
    <property type="project" value="InterPro"/>
</dbReference>
<dbReference type="GO" id="GO:0004519">
    <property type="term" value="F:endonuclease activity"/>
    <property type="evidence" value="ECO:0007669"/>
    <property type="project" value="UniProtKB-UniRule"/>
</dbReference>
<dbReference type="GO" id="GO:0046872">
    <property type="term" value="F:metal ion binding"/>
    <property type="evidence" value="ECO:0007669"/>
    <property type="project" value="UniProtKB-UniRule"/>
</dbReference>
<dbReference type="GO" id="GO:0004518">
    <property type="term" value="F:nuclease activity"/>
    <property type="evidence" value="ECO:0000314"/>
    <property type="project" value="UniProtKB"/>
</dbReference>
<dbReference type="GO" id="GO:0051276">
    <property type="term" value="P:chromosome organization"/>
    <property type="evidence" value="ECO:0007669"/>
    <property type="project" value="UniProtKB-UniRule"/>
</dbReference>
<dbReference type="GO" id="GO:0019073">
    <property type="term" value="P:viral DNA genome packaging"/>
    <property type="evidence" value="ECO:0000314"/>
    <property type="project" value="UniProtKB"/>
</dbReference>
<dbReference type="Gene3D" id="3.30.420.280">
    <property type="match status" value="1"/>
</dbReference>
<dbReference type="Gene3D" id="3.40.50.300">
    <property type="entry name" value="P-loop containing nucleotide triphosphate hydrolases"/>
    <property type="match status" value="1"/>
</dbReference>
<dbReference type="HAMAP" id="MF_04145">
    <property type="entry name" value="TERL_SPP1"/>
    <property type="match status" value="1"/>
</dbReference>
<dbReference type="InterPro" id="IPR027417">
    <property type="entry name" value="P-loop_NTPase"/>
</dbReference>
<dbReference type="InterPro" id="IPR006437">
    <property type="entry name" value="Phage_terminase_lsu"/>
</dbReference>
<dbReference type="InterPro" id="IPR035413">
    <property type="entry name" value="Terminase_L_C"/>
</dbReference>
<dbReference type="InterPro" id="IPR035412">
    <property type="entry name" value="Terminase_L_N"/>
</dbReference>
<dbReference type="InterPro" id="IPR044269">
    <property type="entry name" value="Terminase_large_su_SPP1-like"/>
</dbReference>
<dbReference type="InterPro" id="IPR052380">
    <property type="entry name" value="Viral_DNA_packaging_terminase"/>
</dbReference>
<dbReference type="NCBIfam" id="TIGR01547">
    <property type="entry name" value="phage_term_2"/>
    <property type="match status" value="1"/>
</dbReference>
<dbReference type="PANTHER" id="PTHR39184">
    <property type="match status" value="1"/>
</dbReference>
<dbReference type="PANTHER" id="PTHR39184:SF1">
    <property type="entry name" value="PBSX PHAGE TERMINASE LARGE SUBUNIT"/>
    <property type="match status" value="1"/>
</dbReference>
<dbReference type="Pfam" id="PF04466">
    <property type="entry name" value="Terminase_3"/>
    <property type="match status" value="1"/>
</dbReference>
<dbReference type="Pfam" id="PF17288">
    <property type="entry name" value="Terminase_3C"/>
    <property type="match status" value="1"/>
</dbReference>
<keyword id="KW-0002">3D-structure</keyword>
<keyword id="KW-0067">ATP-binding</keyword>
<keyword id="KW-0255">Endonuclease</keyword>
<keyword id="KW-0378">Hydrolase</keyword>
<keyword id="KW-0460">Magnesium</keyword>
<keyword id="KW-0464">Manganese</keyword>
<keyword id="KW-0479">Metal-binding</keyword>
<keyword id="KW-0540">Nuclease</keyword>
<keyword id="KW-0547">Nucleotide-binding</keyword>
<keyword id="KW-1185">Reference proteome</keyword>
<keyword id="KW-0231">Viral genome packaging</keyword>
<keyword id="KW-1188">Viral release from host cell</keyword>
<evidence type="ECO:0000255" key="1">
    <source>
        <dbReference type="HAMAP-Rule" id="MF_04145"/>
    </source>
</evidence>
<evidence type="ECO:0000269" key="2">
    <source>
    </source>
</evidence>
<evidence type="ECO:0000269" key="3">
    <source>
    </source>
</evidence>
<evidence type="ECO:0000269" key="4">
    <source>
    </source>
</evidence>
<evidence type="ECO:0000269" key="5">
    <source>
    </source>
</evidence>
<evidence type="ECO:0000269" key="6">
    <source>
    </source>
</evidence>
<evidence type="ECO:0000269" key="7">
    <source>
    </source>
</evidence>
<evidence type="ECO:0000305" key="8">
    <source>
    </source>
</evidence>
<evidence type="ECO:0007744" key="9">
    <source>
        <dbReference type="PDB" id="2WBN"/>
    </source>
</evidence>
<evidence type="ECO:0007744" key="10">
    <source>
        <dbReference type="PDB" id="2WC9"/>
    </source>
</evidence>
<evidence type="ECO:0007829" key="11">
    <source>
        <dbReference type="PDB" id="2WBN"/>
    </source>
</evidence>
<evidence type="ECO:0007829" key="12">
    <source>
        <dbReference type="PDB" id="2WC9"/>
    </source>
</evidence>
<organism>
    <name type="scientific">Bacillus phage SPP1</name>
    <name type="common">Bacteriophage SPP1</name>
    <dbReference type="NCBI Taxonomy" id="10724"/>
    <lineage>
        <taxon>Viruses</taxon>
        <taxon>Duplodnaviria</taxon>
        <taxon>Heunggongvirae</taxon>
        <taxon>Uroviricota</taxon>
        <taxon>Caudoviricetes</taxon>
    </lineage>
</organism>
<protein>
    <recommendedName>
        <fullName evidence="1">Terminase, large subunit</fullName>
    </recommendedName>
    <alternativeName>
        <fullName evidence="1">DNA-packaging protein</fullName>
    </alternativeName>
    <alternativeName>
        <fullName>Gene product 2</fullName>
        <shortName>gp2</shortName>
    </alternativeName>
    <domain>
        <recommendedName>
            <fullName evidence="1">Endonuclease</fullName>
            <ecNumber evidence="1 2 3 5 6">3.1.-.-</ecNumber>
        </recommendedName>
    </domain>
    <domain>
        <recommendedName>
            <fullName evidence="1">ATPase</fullName>
            <ecNumber evidence="1 2 3">3.6.4.-</ecNumber>
        </recommendedName>
    </domain>
</protein>
<comment type="function">
    <text evidence="1 2 7 8">The terminase large subunit acts as an ATP driven molecular motor necessary for viral DNA translocation into empty capsids and as an endonuclease that cuts the viral genome to initiate and to end a packaging reaction (PubMed:10930407). The terminase lies at a unique vertex of the procapsid and is composed of two subunits, a small terminase subunit involved in viral DNA recognition (packaging sequence), and a large terminase subunit possessing endonucleolytic and ATPase activities (PubMed:23419885). Both terminase subunits heterooligomerize and are docked on the portal protein to form the packaging machine (PubMed:23419885). The terminase large subunit exhibits endonuclease activity and cleaves the viral genome concatemer once the capsid is full (headful packaging) (Probable) (PubMed:10930407). Once the capsid is packaged with the DNA, the terminase complex is substituted by the adapter (gp15) and the stopper protein (gp16) that form the connector (Probable).</text>
</comment>
<comment type="cofactor">
    <cofactor evidence="1 5">
        <name>Mn(2+)</name>
        <dbReference type="ChEBI" id="CHEBI:29035"/>
    </cofactor>
    <cofactor evidence="1 2">
        <name>Mg(2+)</name>
        <dbReference type="ChEBI" id="CHEBI:18420"/>
    </cofactor>
    <text evidence="1 2 5">Binds 2 divalent metal cations per subunit. Mn(2+) is preferred over Mg(2+) (By similarity). Optimum concentration of Mg(2+) is 10 mm (PubMed:10930407). As the Mn(2+) dose increases, gp2 converts supercoiled circular plasmid DNA to nicked open circular DNA, subsequently to linear DNA and finally to completely degraded DNA (PubMed:19444313).</text>
</comment>
<comment type="biophysicochemical properties">
    <phDependence>
        <text evidence="2">Optimum pH is 7.8.</text>
    </phDependence>
</comment>
<comment type="subunit">
    <text evidence="1 3 6">Monomer. Interacts with the terminase small subunit; the active complex is probably composed of two decameric ring-shaped terminase small subunit and two monomeric terminase large subunit (PubMed:12697751). Interacts with the portal protein (PubMed:12697751, PubMed:23118480).</text>
</comment>
<comment type="domain">
    <text evidence="1 4">The N-terminus contains an ATPase domain and the C-terminus contains an endonuclease domain.</text>
</comment>
<proteinExistence type="evidence at protein level"/>
<name>TERL_BPSPP</name>
<reference key="1">
    <citation type="journal article" date="1992" name="J. Mol. Biol.">
        <title>Molecular analysis of the Bacillus subtilis bacteriophage SPP1 region encompassing genes 1 to 6. The products of gene 1 and gene 2 are required for pac cleavage.</title>
        <authorList>
            <person name="Chai S."/>
            <person name="Bravo A."/>
            <person name="Lueder G."/>
            <person name="Nedlin A."/>
            <person name="Trautner T.A."/>
            <person name="Alonso J.C."/>
        </authorList>
    </citation>
    <scope>NUCLEOTIDE SEQUENCE [GENOMIC DNA]</scope>
</reference>
<reference key="2">
    <citation type="journal article" date="1997" name="Gene">
        <title>The complete nucleotide sequence and functional organization of Bacillus subtilis bacteriophage SPP1.</title>
        <authorList>
            <person name="Alonso J.C."/>
            <person name="Luder G."/>
            <person name="Stiege A.C."/>
            <person name="Chai S."/>
            <person name="Weise F."/>
            <person name="Trautner T.A."/>
        </authorList>
    </citation>
    <scope>NUCLEOTIDE SEQUENCE [LARGE SCALE GENOMIC DNA]</scope>
</reference>
<reference key="3">
    <citation type="journal article" date="2018" name="Viruses">
        <title>The revisited genome of Bacillus subtilis bacteriophage SPP1.</title>
        <authorList>
            <person name="Godinho L.M."/>
            <person name="El Sadek Fadel M."/>
            <person name="Monniot C."/>
            <person name="Jakutyte L."/>
            <person name="Auzat I."/>
            <person name="Labarde A."/>
            <person name="Djacem K."/>
            <person name="Oliveira L."/>
            <person name="Carballido-Lopez R."/>
            <person name="Ayora S."/>
            <person name="Tavares P."/>
        </authorList>
    </citation>
    <scope>NUCLEOTIDE SEQUENCE [LARGE SCALE GENOMIC DNA]</scope>
</reference>
<reference key="4">
    <citation type="journal article" date="2000" name="J. Biol. Chem.">
        <title>Functional analysis of the terminase large subunit, G2P, of Bacillus subtilis bacteriophage SPP1.</title>
        <authorList>
            <person name="Gual A."/>
            <person name="Camacho A.G."/>
            <person name="Alonso J.C."/>
        </authorList>
    </citation>
    <scope>CATALYTIC ACTIVITY</scope>
    <scope>FUNCTION</scope>
    <scope>BIOPHYSICOCHEMICAL PROPERTIES</scope>
    <scope>COFACTOR</scope>
</reference>
<reference key="5">
    <citation type="journal article" date="2003" name="J. Biol. Chem.">
        <title>Bacillus subtilis bacteriophage SPP1 DNA packaging motor requires terminase and portal proteins.</title>
        <authorList>
            <person name="Camacho A.G."/>
            <person name="Gual A."/>
            <person name="Lurz R."/>
            <person name="Tavares P."/>
            <person name="Alonso J.C."/>
        </authorList>
    </citation>
    <scope>SUBUNIT</scope>
    <scope>CATALYTIC ACTIVITY</scope>
    <scope>INTERACTION WITH GP1</scope>
    <scope>INTERACTION WITH THE PORTAL PROTEIN</scope>
</reference>
<reference key="6">
    <citation type="journal article" date="2006" name="J. Biol. Chem.">
        <title>The endonuclease domain of bacteriophage terminases belongs to the resolvase/integrase/ribonuclease H superfamily: a bioinformatics analysis validated by a functional study on bacteriophage T5.</title>
        <authorList>
            <person name="Ponchon L."/>
            <person name="Boulanger P."/>
            <person name="Labesse G."/>
            <person name="Letellier L."/>
        </authorList>
    </citation>
    <scope>DOMAIN</scope>
</reference>
<reference key="7">
    <citation type="journal article" date="2008" name="Annu. Rev. Genet.">
        <title>The bacteriophage DNA packaging motor.</title>
        <authorList>
            <person name="Rao V.B."/>
            <person name="Feiss M."/>
        </authorList>
    </citation>
    <scope>REVIEW</scope>
</reference>
<reference key="8">
    <citation type="journal article" date="2013" name="Virus Res.">
        <title>Headful DNA packaging: bacteriophage SPP1 as a model system.</title>
        <authorList>
            <person name="Oliveira L."/>
            <person name="Tavares P."/>
            <person name="Alonso J.C."/>
        </authorList>
    </citation>
    <scope>FUNCTION</scope>
</reference>
<reference key="9">
    <citation type="journal article" date="2013" name="Nucleic Acids Res.">
        <title>The nuclease domain of the SPP1 packaging motor coordinates DNA cleavage and encapsidation.</title>
        <authorList>
            <person name="Cornilleau C."/>
            <person name="Atmane N."/>
            <person name="Jacquet E."/>
            <person name="Smits C."/>
            <person name="Alonso J.C."/>
            <person name="Tavares P."/>
            <person name="Oliveira L."/>
        </authorList>
    </citation>
    <scope>COFACTOR</scope>
    <scope>CATALYTIC ACTIVITY</scope>
    <scope>INTERACTION WITH THE PORTAL PROTEIN</scope>
</reference>
<reference evidence="9 10" key="10">
    <citation type="journal article" date="2009" name="EMBO Rep.">
        <title>Structural basis for the nuclease activity of a bacteriophage large terminase.</title>
        <authorList>
            <person name="Smits C."/>
            <person name="Chechik M."/>
            <person name="Kovalevskiy O.V."/>
            <person name="Shevtsov M.B."/>
            <person name="Foster A.W."/>
            <person name="Alonso J.C."/>
            <person name="Antson A.A."/>
        </authorList>
    </citation>
    <scope>X-RAY CRYSTALLOGRAPHY (1.90 ANGSTROMS) OF 232-422 IN COMPLEX WITH MANGANESE</scope>
    <scope>MUTAGENESIS OF ASP-266; ASP-321; HIS-400 AND ASP-403</scope>
    <scope>COFACTOR</scope>
    <scope>CATALYTIC ACTIVITY</scope>
</reference>
<accession>P54308</accession>
<sequence length="422" mass="48841">MKKVRLSEKFTPHFLEVWRTVKAAQHLKYVLKGGRGSAKSTHIAMWIILLMMMMPITFLVIRRVYNTVEQSVFEQLKEAIDMLEVGHLWKVSKSPLRLTYIPRGNSIIFRGGDDVQKIKSIKASKFPVAGMWIEELAEFKTEEEVSVIEKSVLRAELPPGCRYIFFYSYNPPKRKQSWVNKVFNSSFLPANTFVDHSTYLQNPFLSKAFIEEAEEVKRRNELKYRHEYLGEALGSGVVPFENLQIEEGIITDAEVARFDNIRQGLDFGYGPDPLAFVRWHYDKRKNRIYAIDELVDHKVSLKRTADFVRKNKYESARIIADSSEPRSIDALKLEHGINRIEGAKKGPDSVEHGERWLDELDAIVIDPLRTPNIAREFENIDYQTDKNGDPIPRLEDKDNHTIDATRYAFERDMKKGGVSLWG</sequence>
<organismHost>
    <name type="scientific">Bacillus subtilis</name>
    <dbReference type="NCBI Taxonomy" id="1423"/>
</organismHost>